<proteinExistence type="inferred from homology"/>
<feature type="chain" id="PRO_1000019112" description="Molybdenum cofactor guanylyltransferase">
    <location>
        <begin position="1"/>
        <end position="205"/>
    </location>
</feature>
<feature type="binding site" evidence="1">
    <location>
        <begin position="14"/>
        <end position="16"/>
    </location>
    <ligand>
        <name>GTP</name>
        <dbReference type="ChEBI" id="CHEBI:37565"/>
    </ligand>
</feature>
<feature type="binding site" evidence="1">
    <location>
        <position position="27"/>
    </location>
    <ligand>
        <name>GTP</name>
        <dbReference type="ChEBI" id="CHEBI:37565"/>
    </ligand>
</feature>
<feature type="binding site" evidence="1">
    <location>
        <position position="77"/>
    </location>
    <ligand>
        <name>GTP</name>
        <dbReference type="ChEBI" id="CHEBI:37565"/>
    </ligand>
</feature>
<feature type="binding site" evidence="1">
    <location>
        <position position="107"/>
    </location>
    <ligand>
        <name>GTP</name>
        <dbReference type="ChEBI" id="CHEBI:37565"/>
    </ligand>
</feature>
<feature type="binding site" evidence="1">
    <location>
        <position position="107"/>
    </location>
    <ligand>
        <name>Mg(2+)</name>
        <dbReference type="ChEBI" id="CHEBI:18420"/>
    </ligand>
</feature>
<sequence>MPASVTPSITGLLLAGGRATRMDGADKGLQLLDGTPLALHVLRRLAGQVDEMVISANRNADRYAELGAPFGARVVPDETLDFAGPLAGLLAGMRAARAPLVVCAPCDTPSLPTDLVARLHAAFDAHRADIAMAVTVDAQHARSPQPTFALLRTSLADDLAAALAAGERKVRAWYARHKTVEVEFRDERAFYNANSWQELAALARR</sequence>
<keyword id="KW-0963">Cytoplasm</keyword>
<keyword id="KW-0342">GTP-binding</keyword>
<keyword id="KW-0460">Magnesium</keyword>
<keyword id="KW-0479">Metal-binding</keyword>
<keyword id="KW-0501">Molybdenum cofactor biosynthesis</keyword>
<keyword id="KW-0547">Nucleotide-binding</keyword>
<keyword id="KW-0808">Transferase</keyword>
<dbReference type="EC" id="2.7.7.77" evidence="1"/>
<dbReference type="EMBL" id="CP000614">
    <property type="protein sequence ID" value="ABO54039.1"/>
    <property type="molecule type" value="Genomic_DNA"/>
</dbReference>
<dbReference type="SMR" id="A4JCN6"/>
<dbReference type="KEGG" id="bvi:Bcep1808_1028"/>
<dbReference type="eggNOG" id="COG0746">
    <property type="taxonomic scope" value="Bacteria"/>
</dbReference>
<dbReference type="HOGENOM" id="CLU_055597_5_1_4"/>
<dbReference type="Proteomes" id="UP000002287">
    <property type="component" value="Chromosome 1"/>
</dbReference>
<dbReference type="GO" id="GO:0005737">
    <property type="term" value="C:cytoplasm"/>
    <property type="evidence" value="ECO:0007669"/>
    <property type="project" value="UniProtKB-SubCell"/>
</dbReference>
<dbReference type="GO" id="GO:0005525">
    <property type="term" value="F:GTP binding"/>
    <property type="evidence" value="ECO:0007669"/>
    <property type="project" value="UniProtKB-UniRule"/>
</dbReference>
<dbReference type="GO" id="GO:0046872">
    <property type="term" value="F:metal ion binding"/>
    <property type="evidence" value="ECO:0007669"/>
    <property type="project" value="UniProtKB-KW"/>
</dbReference>
<dbReference type="GO" id="GO:0061603">
    <property type="term" value="F:molybdenum cofactor guanylyltransferase activity"/>
    <property type="evidence" value="ECO:0007669"/>
    <property type="project" value="UniProtKB-EC"/>
</dbReference>
<dbReference type="GO" id="GO:1902758">
    <property type="term" value="P:bis(molybdopterin guanine dinucleotide)molybdenum biosynthetic process"/>
    <property type="evidence" value="ECO:0007669"/>
    <property type="project" value="TreeGrafter"/>
</dbReference>
<dbReference type="CDD" id="cd02503">
    <property type="entry name" value="MobA"/>
    <property type="match status" value="1"/>
</dbReference>
<dbReference type="Gene3D" id="3.90.550.10">
    <property type="entry name" value="Spore Coat Polysaccharide Biosynthesis Protein SpsA, Chain A"/>
    <property type="match status" value="1"/>
</dbReference>
<dbReference type="HAMAP" id="MF_00316">
    <property type="entry name" value="MobA"/>
    <property type="match status" value="1"/>
</dbReference>
<dbReference type="InterPro" id="IPR025877">
    <property type="entry name" value="MobA-like_NTP_Trfase"/>
</dbReference>
<dbReference type="InterPro" id="IPR013482">
    <property type="entry name" value="Molybde_CF_guanTrfase"/>
</dbReference>
<dbReference type="InterPro" id="IPR029044">
    <property type="entry name" value="Nucleotide-diphossugar_trans"/>
</dbReference>
<dbReference type="NCBIfam" id="TIGR02665">
    <property type="entry name" value="molyb_mobA"/>
    <property type="match status" value="1"/>
</dbReference>
<dbReference type="PANTHER" id="PTHR19136">
    <property type="entry name" value="MOLYBDENUM COFACTOR GUANYLYLTRANSFERASE"/>
    <property type="match status" value="1"/>
</dbReference>
<dbReference type="PANTHER" id="PTHR19136:SF81">
    <property type="entry name" value="MOLYBDENUM COFACTOR GUANYLYLTRANSFERASE"/>
    <property type="match status" value="1"/>
</dbReference>
<dbReference type="Pfam" id="PF12804">
    <property type="entry name" value="NTP_transf_3"/>
    <property type="match status" value="1"/>
</dbReference>
<dbReference type="SUPFAM" id="SSF53448">
    <property type="entry name" value="Nucleotide-diphospho-sugar transferases"/>
    <property type="match status" value="1"/>
</dbReference>
<comment type="function">
    <text evidence="1">Transfers a GMP moiety from GTP to Mo-molybdopterin (Mo-MPT) cofactor (Moco or molybdenum cofactor) to form Mo-molybdopterin guanine dinucleotide (Mo-MGD) cofactor.</text>
</comment>
<comment type="catalytic activity">
    <reaction evidence="1">
        <text>Mo-molybdopterin + GTP + H(+) = Mo-molybdopterin guanine dinucleotide + diphosphate</text>
        <dbReference type="Rhea" id="RHEA:34243"/>
        <dbReference type="ChEBI" id="CHEBI:15378"/>
        <dbReference type="ChEBI" id="CHEBI:33019"/>
        <dbReference type="ChEBI" id="CHEBI:37565"/>
        <dbReference type="ChEBI" id="CHEBI:71302"/>
        <dbReference type="ChEBI" id="CHEBI:71310"/>
        <dbReference type="EC" id="2.7.7.77"/>
    </reaction>
</comment>
<comment type="cofactor">
    <cofactor evidence="1">
        <name>Mg(2+)</name>
        <dbReference type="ChEBI" id="CHEBI:18420"/>
    </cofactor>
</comment>
<comment type="subunit">
    <text evidence="1">Monomer.</text>
</comment>
<comment type="subcellular location">
    <subcellularLocation>
        <location evidence="1">Cytoplasm</location>
    </subcellularLocation>
</comment>
<comment type="domain">
    <text evidence="1">The N-terminal domain determines nucleotide recognition and specific binding, while the C-terminal domain determines the specific binding to the target protein.</text>
</comment>
<comment type="similarity">
    <text evidence="1">Belongs to the MobA family.</text>
</comment>
<organism>
    <name type="scientific">Burkholderia vietnamiensis (strain G4 / LMG 22486)</name>
    <name type="common">Burkholderia cepacia (strain R1808)</name>
    <dbReference type="NCBI Taxonomy" id="269482"/>
    <lineage>
        <taxon>Bacteria</taxon>
        <taxon>Pseudomonadati</taxon>
        <taxon>Pseudomonadota</taxon>
        <taxon>Betaproteobacteria</taxon>
        <taxon>Burkholderiales</taxon>
        <taxon>Burkholderiaceae</taxon>
        <taxon>Burkholderia</taxon>
        <taxon>Burkholderia cepacia complex</taxon>
    </lineage>
</organism>
<gene>
    <name evidence="1" type="primary">mobA</name>
    <name type="ordered locus">Bcep1808_1028</name>
</gene>
<name>MOBA_BURVG</name>
<accession>A4JCN6</accession>
<evidence type="ECO:0000255" key="1">
    <source>
        <dbReference type="HAMAP-Rule" id="MF_00316"/>
    </source>
</evidence>
<reference key="1">
    <citation type="submission" date="2007-03" db="EMBL/GenBank/DDBJ databases">
        <title>Complete sequence of chromosome 1 of Burkholderia vietnamiensis G4.</title>
        <authorList>
            <consortium name="US DOE Joint Genome Institute"/>
            <person name="Copeland A."/>
            <person name="Lucas S."/>
            <person name="Lapidus A."/>
            <person name="Barry K."/>
            <person name="Detter J.C."/>
            <person name="Glavina del Rio T."/>
            <person name="Hammon N."/>
            <person name="Israni S."/>
            <person name="Dalin E."/>
            <person name="Tice H."/>
            <person name="Pitluck S."/>
            <person name="Chain P."/>
            <person name="Malfatti S."/>
            <person name="Shin M."/>
            <person name="Vergez L."/>
            <person name="Schmutz J."/>
            <person name="Larimer F."/>
            <person name="Land M."/>
            <person name="Hauser L."/>
            <person name="Kyrpides N."/>
            <person name="Tiedje J."/>
            <person name="Richardson P."/>
        </authorList>
    </citation>
    <scope>NUCLEOTIDE SEQUENCE [LARGE SCALE GENOMIC DNA]</scope>
    <source>
        <strain>G4 / LMG 22486</strain>
    </source>
</reference>
<protein>
    <recommendedName>
        <fullName evidence="1">Molybdenum cofactor guanylyltransferase</fullName>
        <shortName evidence="1">MoCo guanylyltransferase</shortName>
        <ecNumber evidence="1">2.7.7.77</ecNumber>
    </recommendedName>
    <alternativeName>
        <fullName evidence="1">GTP:molybdopterin guanylyltransferase</fullName>
    </alternativeName>
    <alternativeName>
        <fullName evidence="1">Mo-MPT guanylyltransferase</fullName>
    </alternativeName>
    <alternativeName>
        <fullName evidence="1">Molybdopterin guanylyltransferase</fullName>
    </alternativeName>
    <alternativeName>
        <fullName evidence="1">Molybdopterin-guanine dinucleotide synthase</fullName>
        <shortName evidence="1">MGD synthase</shortName>
    </alternativeName>
</protein>